<reference key="1">
    <citation type="journal article" date="2005" name="Biochim. Biophys. Acta">
        <title>Isolation and molecular characterization of LVP1 lipolysis activating peptide from scorpion Buthus occitanus tunetanus.</title>
        <authorList>
            <person name="Soudani N."/>
            <person name="Gharbi-Chihi J."/>
            <person name="Srairi-Abid N."/>
            <person name="Martin-El Yazidi C."/>
            <person name="Planells R."/>
            <person name="Margotat A."/>
            <person name="Torresani J."/>
            <person name="El Ayeb M."/>
        </authorList>
    </citation>
    <scope>NUCLEOTIDE SEQUENCE [MRNA]</scope>
    <scope>PROTEIN SEQUENCE OF 23-64 AND 76-95</scope>
    <scope>FUNCTION</scope>
    <scope>SUBUNIT</scope>
    <scope>SUBCELLULAR LOCATION</scope>
    <scope>MASS SPECTROMETRY</scope>
    <source>
        <tissue>Venom</tissue>
        <tissue>Venom gland</tissue>
    </source>
</reference>
<name>LV1B_BUTOC</name>
<sequence length="95" mass="10386">MISVQVIFIAFISIIAFSMVCGGNVFPNRELGILYGCKGYGNAFCDKVCKMHLARGGGRCGEPNPVMWACECIDIDEDNGYFLNALEKQCPLLKG</sequence>
<dbReference type="GO" id="GO:0005576">
    <property type="term" value="C:extracellular region"/>
    <property type="evidence" value="ECO:0000314"/>
    <property type="project" value="UniProtKB"/>
</dbReference>
<dbReference type="GO" id="GO:0008200">
    <property type="term" value="F:ion channel inhibitor activity"/>
    <property type="evidence" value="ECO:0007669"/>
    <property type="project" value="InterPro"/>
</dbReference>
<dbReference type="GO" id="GO:0015459">
    <property type="term" value="F:potassium channel regulator activity"/>
    <property type="evidence" value="ECO:0007669"/>
    <property type="project" value="UniProtKB-KW"/>
</dbReference>
<dbReference type="GO" id="GO:0017080">
    <property type="term" value="F:sodium channel regulator activity"/>
    <property type="evidence" value="ECO:0007669"/>
    <property type="project" value="UniProtKB-KW"/>
</dbReference>
<dbReference type="GO" id="GO:0090729">
    <property type="term" value="F:toxin activity"/>
    <property type="evidence" value="ECO:0007669"/>
    <property type="project" value="UniProtKB-KW"/>
</dbReference>
<dbReference type="GO" id="GO:0006952">
    <property type="term" value="P:defense response"/>
    <property type="evidence" value="ECO:0000314"/>
    <property type="project" value="UniProtKB"/>
</dbReference>
<dbReference type="GO" id="GO:0050996">
    <property type="term" value="P:positive regulation of lipid catabolic process"/>
    <property type="evidence" value="ECO:0000314"/>
    <property type="project" value="UniProtKB"/>
</dbReference>
<dbReference type="InterPro" id="IPR044062">
    <property type="entry name" value="LCN-type_CS_alpha_beta_dom"/>
</dbReference>
<dbReference type="InterPro" id="IPR036574">
    <property type="entry name" value="Scorpion_toxin-like_sf"/>
</dbReference>
<dbReference type="SUPFAM" id="SSF57095">
    <property type="entry name" value="Scorpion toxin-like"/>
    <property type="match status" value="1"/>
</dbReference>
<dbReference type="PROSITE" id="PS51863">
    <property type="entry name" value="LCN_CSAB"/>
    <property type="match status" value="1"/>
</dbReference>
<feature type="signal peptide" evidence="5">
    <location>
        <begin position="1"/>
        <end position="22"/>
    </location>
</feature>
<feature type="chain" id="PRO_0000232423" description="Lipolysis-activating peptide 1-beta chain">
    <location>
        <begin position="23"/>
        <end position="95"/>
    </location>
</feature>
<feature type="domain" description="LCN-type CS-alpha/beta" evidence="4">
    <location>
        <begin position="23"/>
        <end position="91"/>
    </location>
</feature>
<feature type="disulfide bond" evidence="2">
    <location>
        <begin position="37"/>
        <end position="60"/>
    </location>
</feature>
<feature type="disulfide bond" evidence="2">
    <location>
        <begin position="45"/>
        <end position="70"/>
    </location>
</feature>
<feature type="disulfide bond" evidence="2">
    <location>
        <begin position="49"/>
        <end position="72"/>
    </location>
</feature>
<feature type="disulfide bond" description="Interchain (with C-86 in BotLVP1 chain alpha)" evidence="6">
    <location>
        <position position="90"/>
    </location>
</feature>
<proteinExistence type="evidence at protein level"/>
<keyword id="KW-0903">Direct protein sequencing</keyword>
<keyword id="KW-1015">Disulfide bond</keyword>
<keyword id="KW-1213">G-protein coupled receptor impairing toxin</keyword>
<keyword id="KW-0872">Ion channel impairing toxin</keyword>
<keyword id="KW-0528">Neurotoxin</keyword>
<keyword id="KW-0632">Potassium channel impairing toxin</keyword>
<keyword id="KW-0691">RNA editing</keyword>
<keyword id="KW-0964">Secreted</keyword>
<keyword id="KW-0732">Signal</keyword>
<keyword id="KW-0800">Toxin</keyword>
<keyword id="KW-1220">Voltage-gated potassium channel impairing toxin</keyword>
<keyword id="KW-0738">Voltage-gated sodium channel impairing toxin</keyword>
<accession>P84809</accession>
<organism>
    <name type="scientific">Buthus occitanus tunetanus</name>
    <name type="common">Common European scorpion</name>
    <name type="synonym">Buthus tunetanus</name>
    <dbReference type="NCBI Taxonomy" id="6871"/>
    <lineage>
        <taxon>Eukaryota</taxon>
        <taxon>Metazoa</taxon>
        <taxon>Ecdysozoa</taxon>
        <taxon>Arthropoda</taxon>
        <taxon>Chelicerata</taxon>
        <taxon>Arachnida</taxon>
        <taxon>Scorpiones</taxon>
        <taxon>Buthida</taxon>
        <taxon>Buthoidea</taxon>
        <taxon>Buthidae</taxon>
        <taxon>Buthus</taxon>
    </lineage>
</organism>
<protein>
    <recommendedName>
        <fullName>Lipolysis-activating peptide 1-beta chain</fullName>
        <shortName>BotLVP1-beta</shortName>
        <shortName>LVP1-beta</shortName>
    </recommendedName>
</protein>
<evidence type="ECO:0000250" key="1"/>
<evidence type="ECO:0000250" key="2">
    <source>
        <dbReference type="UniProtKB" id="P01493"/>
    </source>
</evidence>
<evidence type="ECO:0000250" key="3">
    <source>
        <dbReference type="UniProtKB" id="Q95P90"/>
    </source>
</evidence>
<evidence type="ECO:0000255" key="4">
    <source>
        <dbReference type="PROSITE-ProRule" id="PRU01210"/>
    </source>
</evidence>
<evidence type="ECO:0000269" key="5">
    <source>
    </source>
</evidence>
<evidence type="ECO:0000305" key="6"/>
<evidence type="ECO:0000305" key="7">
    <source>
    </source>
</evidence>
<comment type="function">
    <text evidence="1">The homodimer inhibits HMG-CoA reductase (HMGCR) (32% of inhibition produced by 0.6 uM), a glycoprotein involved in the control of cholesterol biosynthesis. The inhibitory effects of bumarsin are seen at much lower concentrations (0.6 uM) than that for statins such as atorvastatin (5 mM) and simvastatin (10 uM). In addition to inhibition of HMG-CoA reductase, this protein lowers cholesterol levels by inducing steroid hormone synthesis via StAR, and by increasing reverse cholesterol transport mediated by the induction of ABCA1 and APOA1 (By similarity).</text>
</comment>
<comment type="function">
    <text evidence="5">The heterodimer non-edited LVP1 induces lipolysis in rat adipocytes. Induction of lipolysis by LVP1 appears to be mediated through the beta-2 adrenergic receptor pathway (ADRB2). Intracerebroventricular injection is not toxic to mice.</text>
</comment>
<comment type="function">
    <text evidence="7">The monomer edited version, similar to alpha-toxins, may modulate voltage-gated sodium channels (Nav) and may block voltage-gated potassium channels (Kv).</text>
</comment>
<comment type="subunit">
    <text evidence="3">Homodimer; disulfide-linked or monomer (edited version) or heterodimer of an alpha chain (AC P84810) and this beta chain (non-edited version).</text>
</comment>
<comment type="subcellular location">
    <subcellularLocation>
        <location evidence="5">Secreted</location>
    </subcellularLocation>
</comment>
<comment type="tissue specificity">
    <text evidence="7">Expressed by the venom gland.</text>
</comment>
<comment type="domain">
    <text evidence="6">Has the structural arrangement of an alpha-helix connected to antiparallel beta-sheets by disulfide bonds (CS-alpha/beta).</text>
</comment>
<comment type="RNA editing">
    <location>
        <position position="34" evidence="1"/>
    </location>
    <text evidence="1">Partially edited. RNA editing at this position consists of an insertion of three nucleotides, restoring the first Cys residue that forms a disulfide bond with Cys-90, giving a monomeric toxin with 4 disulfide bonds (By similarity).</text>
</comment>
<comment type="mass spectrometry" mass="8877.0" method="MALDI" evidence="5"/>
<comment type="similarity">
    <text evidence="6">Belongs to the long (3 C-C) scorpion toxin superfamily.</text>
</comment>